<gene>
    <name type="primary">MDH3</name>
    <name type="ordered locus">YDL078C</name>
    <name type="ORF">D2468</name>
</gene>
<organism>
    <name type="scientific">Saccharomyces cerevisiae (strain ATCC 204508 / S288c)</name>
    <name type="common">Baker's yeast</name>
    <dbReference type="NCBI Taxonomy" id="559292"/>
    <lineage>
        <taxon>Eukaryota</taxon>
        <taxon>Fungi</taxon>
        <taxon>Dikarya</taxon>
        <taxon>Ascomycota</taxon>
        <taxon>Saccharomycotina</taxon>
        <taxon>Saccharomycetes</taxon>
        <taxon>Saccharomycetales</taxon>
        <taxon>Saccharomycetaceae</taxon>
        <taxon>Saccharomyces</taxon>
    </lineage>
</organism>
<sequence length="343" mass="37186">MVKVAILGASGGVGQPLSLLLKLSPYVSELALYDIRAAEGIGKDLSHINTNSSCVGYDKDSIENTLSNAQVVLIPAGVPRKPGLTRDDLFKMNAGIVKSLVTAVGKFAPNARILVISNPVNSLVPIAVETLKKMGKFKPGNVMGVTNLDLVRAETFLVDYLMLKNPKIGQEQDKTTMHRKVTVIGGHSGETIIPIITDKSLVFQLDKQYEHFIHRVQFGGDEIVKAKQGAGSATLSMAFAGAKFAEEVLRSFHNEKPETESLSAFVYLPGLKNGKKAQQLVGDNSIEYFSLPIVLRNGSVVSIDTSVLEKLSPREEQLVNTAVKELRKNIEKGKSFILDSSKL</sequence>
<proteinExistence type="evidence at protein level"/>
<protein>
    <recommendedName>
        <fullName>Malate dehydrogenase, peroxisomal</fullName>
        <ecNumber>1.1.1.37</ecNumber>
    </recommendedName>
</protein>
<dbReference type="EC" id="1.1.1.37"/>
<dbReference type="EMBL" id="M98763">
    <property type="protein sequence ID" value="AAA34767.1"/>
    <property type="molecule type" value="Genomic_DNA"/>
</dbReference>
<dbReference type="EMBL" id="Z74126">
    <property type="protein sequence ID" value="CAA98644.1"/>
    <property type="molecule type" value="Genomic_DNA"/>
</dbReference>
<dbReference type="EMBL" id="BK006938">
    <property type="protein sequence ID" value="DAA11781.1"/>
    <property type="molecule type" value="Genomic_DNA"/>
</dbReference>
<dbReference type="PIR" id="S67614">
    <property type="entry name" value="DEBYMP"/>
</dbReference>
<dbReference type="RefSeq" id="NP_010205.1">
    <property type="nucleotide sequence ID" value="NM_001180137.1"/>
</dbReference>
<dbReference type="PDB" id="5ZI2">
    <property type="method" value="X-ray"/>
    <property type="resolution" value="2.00 A"/>
    <property type="chains" value="A/B=1-343"/>
</dbReference>
<dbReference type="PDB" id="5ZI3">
    <property type="method" value="X-ray"/>
    <property type="resolution" value="2.10 A"/>
    <property type="chains" value="A/B=1-343"/>
</dbReference>
<dbReference type="PDB" id="5ZI4">
    <property type="method" value="X-ray"/>
    <property type="resolution" value="2.10 A"/>
    <property type="chains" value="A/B=1-343"/>
</dbReference>
<dbReference type="PDBsum" id="5ZI2"/>
<dbReference type="PDBsum" id="5ZI3"/>
<dbReference type="PDBsum" id="5ZI4"/>
<dbReference type="SMR" id="P32419"/>
<dbReference type="BioGRID" id="31983">
    <property type="interactions" value="180"/>
</dbReference>
<dbReference type="DIP" id="DIP-6473N"/>
<dbReference type="FunCoup" id="P32419">
    <property type="interactions" value="300"/>
</dbReference>
<dbReference type="IntAct" id="P32419">
    <property type="interactions" value="9"/>
</dbReference>
<dbReference type="MINT" id="P32419"/>
<dbReference type="STRING" id="4932.YDL078C"/>
<dbReference type="iPTMnet" id="P32419"/>
<dbReference type="PaxDb" id="4932-YDL078C"/>
<dbReference type="PeptideAtlas" id="P32419"/>
<dbReference type="EnsemblFungi" id="YDL078C_mRNA">
    <property type="protein sequence ID" value="YDL078C"/>
    <property type="gene ID" value="YDL078C"/>
</dbReference>
<dbReference type="GeneID" id="851481"/>
<dbReference type="KEGG" id="sce:YDL078C"/>
<dbReference type="AGR" id="SGD:S000002236"/>
<dbReference type="SGD" id="S000002236">
    <property type="gene designation" value="MDH3"/>
</dbReference>
<dbReference type="VEuPathDB" id="FungiDB:YDL078C"/>
<dbReference type="eggNOG" id="KOG1494">
    <property type="taxonomic scope" value="Eukaryota"/>
</dbReference>
<dbReference type="GeneTree" id="ENSGT00940000176501"/>
<dbReference type="HOGENOM" id="CLU_047181_1_1_1"/>
<dbReference type="InParanoid" id="P32419"/>
<dbReference type="OMA" id="MNPLVTE"/>
<dbReference type="OrthoDB" id="4069699at2759"/>
<dbReference type="BioCyc" id="YEAST:YDL078C-MONOMER"/>
<dbReference type="BioGRID-ORCS" id="851481">
    <property type="hits" value="0 hits in 10 CRISPR screens"/>
</dbReference>
<dbReference type="PRO" id="PR:P32419"/>
<dbReference type="Proteomes" id="UP000002311">
    <property type="component" value="Chromosome IV"/>
</dbReference>
<dbReference type="RNAct" id="P32419">
    <property type="molecule type" value="protein"/>
</dbReference>
<dbReference type="GO" id="GO:0005737">
    <property type="term" value="C:cytoplasm"/>
    <property type="evidence" value="ECO:0000318"/>
    <property type="project" value="GO_Central"/>
</dbReference>
<dbReference type="GO" id="GO:0005739">
    <property type="term" value="C:mitochondrion"/>
    <property type="evidence" value="ECO:0000318"/>
    <property type="project" value="GO_Central"/>
</dbReference>
<dbReference type="GO" id="GO:0005782">
    <property type="term" value="C:peroxisomal matrix"/>
    <property type="evidence" value="ECO:0000314"/>
    <property type="project" value="SGD"/>
</dbReference>
<dbReference type="GO" id="GO:0005777">
    <property type="term" value="C:peroxisome"/>
    <property type="evidence" value="ECO:0000314"/>
    <property type="project" value="SGD"/>
</dbReference>
<dbReference type="GO" id="GO:0030060">
    <property type="term" value="F:L-malate dehydrogenase (NAD+) activity"/>
    <property type="evidence" value="ECO:0000314"/>
    <property type="project" value="SGD"/>
</dbReference>
<dbReference type="GO" id="GO:0003729">
    <property type="term" value="F:mRNA binding"/>
    <property type="evidence" value="ECO:0000314"/>
    <property type="project" value="SGD"/>
</dbReference>
<dbReference type="GO" id="GO:0006635">
    <property type="term" value="P:fatty acid beta-oxidation"/>
    <property type="evidence" value="ECO:0000315"/>
    <property type="project" value="SGD"/>
</dbReference>
<dbReference type="GO" id="GO:0006097">
    <property type="term" value="P:glyoxylate cycle"/>
    <property type="evidence" value="ECO:0007669"/>
    <property type="project" value="UniProtKB-KW"/>
</dbReference>
<dbReference type="GO" id="GO:0006108">
    <property type="term" value="P:malate metabolic process"/>
    <property type="evidence" value="ECO:0007669"/>
    <property type="project" value="InterPro"/>
</dbReference>
<dbReference type="GO" id="GO:0006735">
    <property type="term" value="P:NADH regeneration"/>
    <property type="evidence" value="ECO:0000315"/>
    <property type="project" value="SGD"/>
</dbReference>
<dbReference type="GO" id="GO:0006099">
    <property type="term" value="P:tricarboxylic acid cycle"/>
    <property type="evidence" value="ECO:0000318"/>
    <property type="project" value="GO_Central"/>
</dbReference>
<dbReference type="CDD" id="cd01337">
    <property type="entry name" value="MDH_glyoxysomal_mitochondrial"/>
    <property type="match status" value="1"/>
</dbReference>
<dbReference type="FunFam" id="3.40.50.720:FF:000268">
    <property type="entry name" value="Malate dehydrogenase"/>
    <property type="match status" value="1"/>
</dbReference>
<dbReference type="FunFam" id="3.90.110.10:FF:000009">
    <property type="entry name" value="Malate dehydrogenase"/>
    <property type="match status" value="1"/>
</dbReference>
<dbReference type="Gene3D" id="3.90.110.10">
    <property type="entry name" value="Lactate dehydrogenase/glycoside hydrolase, family 4, C-terminal"/>
    <property type="match status" value="1"/>
</dbReference>
<dbReference type="Gene3D" id="3.40.50.720">
    <property type="entry name" value="NAD(P)-binding Rossmann-like Domain"/>
    <property type="match status" value="1"/>
</dbReference>
<dbReference type="InterPro" id="IPR001557">
    <property type="entry name" value="L-lactate/malate_DH"/>
</dbReference>
<dbReference type="InterPro" id="IPR022383">
    <property type="entry name" value="Lactate/malate_DH_C"/>
</dbReference>
<dbReference type="InterPro" id="IPR001236">
    <property type="entry name" value="Lactate/malate_DH_N"/>
</dbReference>
<dbReference type="InterPro" id="IPR015955">
    <property type="entry name" value="Lactate_DH/Glyco_Ohase_4_C"/>
</dbReference>
<dbReference type="InterPro" id="IPR001252">
    <property type="entry name" value="Malate_DH_AS"/>
</dbReference>
<dbReference type="InterPro" id="IPR010097">
    <property type="entry name" value="Malate_DH_type1"/>
</dbReference>
<dbReference type="InterPro" id="IPR036291">
    <property type="entry name" value="NAD(P)-bd_dom_sf"/>
</dbReference>
<dbReference type="NCBIfam" id="TIGR01772">
    <property type="entry name" value="MDH_euk_gproteo"/>
    <property type="match status" value="1"/>
</dbReference>
<dbReference type="PANTHER" id="PTHR11540">
    <property type="entry name" value="MALATE AND LACTATE DEHYDROGENASE"/>
    <property type="match status" value="1"/>
</dbReference>
<dbReference type="PANTHER" id="PTHR11540:SF72">
    <property type="entry name" value="MALATE DEHYDROGENASE, PEROXISOMAL"/>
    <property type="match status" value="1"/>
</dbReference>
<dbReference type="Pfam" id="PF02866">
    <property type="entry name" value="Ldh_1_C"/>
    <property type="match status" value="1"/>
</dbReference>
<dbReference type="Pfam" id="PF00056">
    <property type="entry name" value="Ldh_1_N"/>
    <property type="match status" value="1"/>
</dbReference>
<dbReference type="PIRSF" id="PIRSF000102">
    <property type="entry name" value="Lac_mal_DH"/>
    <property type="match status" value="1"/>
</dbReference>
<dbReference type="SUPFAM" id="SSF56327">
    <property type="entry name" value="LDH C-terminal domain-like"/>
    <property type="match status" value="1"/>
</dbReference>
<dbReference type="SUPFAM" id="SSF51735">
    <property type="entry name" value="NAD(P)-binding Rossmann-fold domains"/>
    <property type="match status" value="1"/>
</dbReference>
<dbReference type="PROSITE" id="PS00068">
    <property type="entry name" value="MDH"/>
    <property type="match status" value="1"/>
</dbReference>
<accession>P32419</accession>
<accession>D6VRS1</accession>
<accession>Q12689</accession>
<keyword id="KW-0002">3D-structure</keyword>
<keyword id="KW-0903">Direct protein sequencing</keyword>
<keyword id="KW-0329">Glyoxylate bypass</keyword>
<keyword id="KW-0520">NAD</keyword>
<keyword id="KW-0560">Oxidoreductase</keyword>
<keyword id="KW-0576">Peroxisome</keyword>
<keyword id="KW-1185">Reference proteome</keyword>
<keyword id="KW-0816">Tricarboxylic acid cycle</keyword>
<reference key="1">
    <citation type="journal article" date="1992" name="J. Biol. Chem.">
        <title>Isolation and characterization of the yeast gene encoding the MDH3 isozyme of malate dehydrogenase.</title>
        <authorList>
            <person name="Steffan J.S."/>
            <person name="McAlister-Henn L."/>
        </authorList>
    </citation>
    <scope>NUCLEOTIDE SEQUENCE [GENOMIC DNA]</scope>
    <scope>PROTEIN SEQUENCE OF 2-16; 23-36 AND 153-167</scope>
</reference>
<reference key="2">
    <citation type="journal article" date="1997" name="Nature">
        <title>The nucleotide sequence of Saccharomyces cerevisiae chromosome IV.</title>
        <authorList>
            <person name="Jacq C."/>
            <person name="Alt-Moerbe J."/>
            <person name="Andre B."/>
            <person name="Arnold W."/>
            <person name="Bahr A."/>
            <person name="Ballesta J.P.G."/>
            <person name="Bargues M."/>
            <person name="Baron L."/>
            <person name="Becker A."/>
            <person name="Biteau N."/>
            <person name="Bloecker H."/>
            <person name="Blugeon C."/>
            <person name="Boskovic J."/>
            <person name="Brandt P."/>
            <person name="Brueckner M."/>
            <person name="Buitrago M.J."/>
            <person name="Coster F."/>
            <person name="Delaveau T."/>
            <person name="del Rey F."/>
            <person name="Dujon B."/>
            <person name="Eide L.G."/>
            <person name="Garcia-Cantalejo J.M."/>
            <person name="Goffeau A."/>
            <person name="Gomez-Peris A."/>
            <person name="Granotier C."/>
            <person name="Hanemann V."/>
            <person name="Hankeln T."/>
            <person name="Hoheisel J.D."/>
            <person name="Jaeger W."/>
            <person name="Jimenez A."/>
            <person name="Jonniaux J.-L."/>
            <person name="Kraemer C."/>
            <person name="Kuester H."/>
            <person name="Laamanen P."/>
            <person name="Legros Y."/>
            <person name="Louis E.J."/>
            <person name="Moeller-Rieker S."/>
            <person name="Monnet A."/>
            <person name="Moro M."/>
            <person name="Mueller-Auer S."/>
            <person name="Nussbaumer B."/>
            <person name="Paricio N."/>
            <person name="Paulin L."/>
            <person name="Perea J."/>
            <person name="Perez-Alonso M."/>
            <person name="Perez-Ortin J.E."/>
            <person name="Pohl T.M."/>
            <person name="Prydz H."/>
            <person name="Purnelle B."/>
            <person name="Rasmussen S.W."/>
            <person name="Remacha M.A."/>
            <person name="Revuelta J.L."/>
            <person name="Rieger M."/>
            <person name="Salom D."/>
            <person name="Saluz H.P."/>
            <person name="Saiz J.E."/>
            <person name="Saren A.-M."/>
            <person name="Schaefer M."/>
            <person name="Scharfe M."/>
            <person name="Schmidt E.R."/>
            <person name="Schneider C."/>
            <person name="Scholler P."/>
            <person name="Schwarz S."/>
            <person name="Soler-Mira A."/>
            <person name="Urrestarazu L.A."/>
            <person name="Verhasselt P."/>
            <person name="Vissers S."/>
            <person name="Voet M."/>
            <person name="Volckaert G."/>
            <person name="Wagner G."/>
            <person name="Wambutt R."/>
            <person name="Wedler E."/>
            <person name="Wedler H."/>
            <person name="Woelfl S."/>
            <person name="Harris D.E."/>
            <person name="Bowman S."/>
            <person name="Brown D."/>
            <person name="Churcher C.M."/>
            <person name="Connor R."/>
            <person name="Dedman K."/>
            <person name="Gentles S."/>
            <person name="Hamlin N."/>
            <person name="Hunt S."/>
            <person name="Jones L."/>
            <person name="McDonald S."/>
            <person name="Murphy L.D."/>
            <person name="Niblett D."/>
            <person name="Odell C."/>
            <person name="Oliver K."/>
            <person name="Rajandream M.A."/>
            <person name="Richards C."/>
            <person name="Shore L."/>
            <person name="Walsh S.V."/>
            <person name="Barrell B.G."/>
            <person name="Dietrich F.S."/>
            <person name="Mulligan J.T."/>
            <person name="Allen E."/>
            <person name="Araujo R."/>
            <person name="Aviles E."/>
            <person name="Berno A."/>
            <person name="Carpenter J."/>
            <person name="Chen E."/>
            <person name="Cherry J.M."/>
            <person name="Chung E."/>
            <person name="Duncan M."/>
            <person name="Hunicke-Smith S."/>
            <person name="Hyman R.W."/>
            <person name="Komp C."/>
            <person name="Lashkari D."/>
            <person name="Lew H."/>
            <person name="Lin D."/>
            <person name="Mosedale D."/>
            <person name="Nakahara K."/>
            <person name="Namath A."/>
            <person name="Oefner P."/>
            <person name="Oh C."/>
            <person name="Petel F.X."/>
            <person name="Roberts D."/>
            <person name="Schramm S."/>
            <person name="Schroeder M."/>
            <person name="Shogren T."/>
            <person name="Shroff N."/>
            <person name="Winant A."/>
            <person name="Yelton M.A."/>
            <person name="Botstein D."/>
            <person name="Davis R.W."/>
            <person name="Johnston M."/>
            <person name="Andrews S."/>
            <person name="Brinkman R."/>
            <person name="Cooper J."/>
            <person name="Ding H."/>
            <person name="Du Z."/>
            <person name="Favello A."/>
            <person name="Fulton L."/>
            <person name="Gattung S."/>
            <person name="Greco T."/>
            <person name="Hallsworth K."/>
            <person name="Hawkins J."/>
            <person name="Hillier L.W."/>
            <person name="Jier M."/>
            <person name="Johnson D."/>
            <person name="Johnston L."/>
            <person name="Kirsten J."/>
            <person name="Kucaba T."/>
            <person name="Langston Y."/>
            <person name="Latreille P."/>
            <person name="Le T."/>
            <person name="Mardis E."/>
            <person name="Menezes S."/>
            <person name="Miller N."/>
            <person name="Nhan M."/>
            <person name="Pauley A."/>
            <person name="Peluso D."/>
            <person name="Rifkin L."/>
            <person name="Riles L."/>
            <person name="Taich A."/>
            <person name="Trevaskis E."/>
            <person name="Vignati D."/>
            <person name="Wilcox L."/>
            <person name="Wohldman P."/>
            <person name="Vaudin M."/>
            <person name="Wilson R."/>
            <person name="Waterston R."/>
            <person name="Albermann K."/>
            <person name="Hani J."/>
            <person name="Heumann K."/>
            <person name="Kleine K."/>
            <person name="Mewes H.-W."/>
            <person name="Zollner A."/>
            <person name="Zaccaria P."/>
        </authorList>
    </citation>
    <scope>NUCLEOTIDE SEQUENCE [LARGE SCALE GENOMIC DNA]</scope>
    <source>
        <strain>ATCC 204508 / S288c</strain>
    </source>
</reference>
<reference key="3">
    <citation type="journal article" date="2014" name="G3 (Bethesda)">
        <title>The reference genome sequence of Saccharomyces cerevisiae: Then and now.</title>
        <authorList>
            <person name="Engel S.R."/>
            <person name="Dietrich F.S."/>
            <person name="Fisk D.G."/>
            <person name="Binkley G."/>
            <person name="Balakrishnan R."/>
            <person name="Costanzo M.C."/>
            <person name="Dwight S.S."/>
            <person name="Hitz B.C."/>
            <person name="Karra K."/>
            <person name="Nash R.S."/>
            <person name="Weng S."/>
            <person name="Wong E.D."/>
            <person name="Lloyd P."/>
            <person name="Skrzypek M.S."/>
            <person name="Miyasato S.R."/>
            <person name="Simison M."/>
            <person name="Cherry J.M."/>
        </authorList>
    </citation>
    <scope>GENOME REANNOTATION</scope>
    <source>
        <strain>ATCC 204508 / S288c</strain>
    </source>
</reference>
<reference key="4">
    <citation type="journal article" date="2003" name="Nature">
        <title>Global analysis of protein expression in yeast.</title>
        <authorList>
            <person name="Ghaemmaghami S."/>
            <person name="Huh W.-K."/>
            <person name="Bower K."/>
            <person name="Howson R.W."/>
            <person name="Belle A."/>
            <person name="Dephoure N."/>
            <person name="O'Shea E.K."/>
            <person name="Weissman J.S."/>
        </authorList>
    </citation>
    <scope>LEVEL OF PROTEIN EXPRESSION [LARGE SCALE ANALYSIS]</scope>
</reference>
<name>MDHP_YEAST</name>
<comment type="catalytic activity">
    <reaction evidence="3">
        <text>(S)-malate + NAD(+) = oxaloacetate + NADH + H(+)</text>
        <dbReference type="Rhea" id="RHEA:21432"/>
        <dbReference type="ChEBI" id="CHEBI:15378"/>
        <dbReference type="ChEBI" id="CHEBI:15589"/>
        <dbReference type="ChEBI" id="CHEBI:16452"/>
        <dbReference type="ChEBI" id="CHEBI:57540"/>
        <dbReference type="ChEBI" id="CHEBI:57945"/>
        <dbReference type="EC" id="1.1.1.37"/>
    </reaction>
</comment>
<comment type="subunit">
    <text>Homodimer.</text>
</comment>
<comment type="subcellular location">
    <subcellularLocation>
        <location>Peroxisome</location>
    </subcellularLocation>
</comment>
<comment type="miscellaneous">
    <text>Yeast contains at least 3 malate dehydrogenase isoenzymes: a mitochondrial (MDH1), a cytoplasmic (MDH2) and a peroxisomal (MDH3).</text>
</comment>
<comment type="miscellaneous">
    <text evidence="5">Present with 3300 molecules/cell in log phase SD medium.</text>
</comment>
<comment type="similarity">
    <text evidence="6">Belongs to the LDH/MDH superfamily. MDH type 1 family.</text>
</comment>
<evidence type="ECO:0000250" key="1">
    <source>
        <dbReference type="UniProtKB" id="P00346"/>
    </source>
</evidence>
<evidence type="ECO:0000250" key="2">
    <source>
        <dbReference type="UniProtKB" id="P40926"/>
    </source>
</evidence>
<evidence type="ECO:0000255" key="3">
    <source>
        <dbReference type="PROSITE-ProRule" id="PRU10004"/>
    </source>
</evidence>
<evidence type="ECO:0000269" key="4">
    <source>
    </source>
</evidence>
<evidence type="ECO:0000269" key="5">
    <source>
    </source>
</evidence>
<evidence type="ECO:0000305" key="6"/>
<evidence type="ECO:0007829" key="7">
    <source>
        <dbReference type="PDB" id="5ZI2"/>
    </source>
</evidence>
<feature type="initiator methionine" description="Removed" evidence="4">
    <location>
        <position position="1"/>
    </location>
</feature>
<feature type="chain" id="PRO_0000113342" description="Malate dehydrogenase, peroxisomal">
    <location>
        <begin position="2"/>
        <end position="343"/>
    </location>
</feature>
<feature type="active site" description="Proton acceptor" evidence="1">
    <location>
        <position position="187"/>
    </location>
</feature>
<feature type="binding site" evidence="2">
    <location>
        <begin position="8"/>
        <end position="14"/>
    </location>
    <ligand>
        <name>NAD(+)</name>
        <dbReference type="ChEBI" id="CHEBI:57540"/>
    </ligand>
</feature>
<feature type="binding site" evidence="2">
    <location>
        <position position="34"/>
    </location>
    <ligand>
        <name>NAD(+)</name>
        <dbReference type="ChEBI" id="CHEBI:57540"/>
    </ligand>
</feature>
<feature type="binding site" evidence="3">
    <location>
        <position position="80"/>
    </location>
    <ligand>
        <name>substrate</name>
    </ligand>
</feature>
<feature type="binding site" evidence="3">
    <location>
        <position position="86"/>
    </location>
    <ligand>
        <name>substrate</name>
    </ligand>
</feature>
<feature type="binding site" evidence="2">
    <location>
        <position position="93"/>
    </location>
    <ligand>
        <name>NAD(+)</name>
        <dbReference type="ChEBI" id="CHEBI:57540"/>
    </ligand>
</feature>
<feature type="binding site" evidence="2">
    <location>
        <begin position="116"/>
        <end position="118"/>
    </location>
    <ligand>
        <name>NAD(+)</name>
        <dbReference type="ChEBI" id="CHEBI:57540"/>
    </ligand>
</feature>
<feature type="binding site" evidence="3">
    <location>
        <position position="118"/>
    </location>
    <ligand>
        <name>substrate</name>
    </ligand>
</feature>
<feature type="binding site" evidence="3">
    <location>
        <position position="152"/>
    </location>
    <ligand>
        <name>substrate</name>
    </ligand>
</feature>
<feature type="binding site" evidence="2">
    <location>
        <position position="237"/>
    </location>
    <ligand>
        <name>NAD(+)</name>
        <dbReference type="ChEBI" id="CHEBI:57540"/>
    </ligand>
</feature>
<feature type="sequence conflict" description="In Ref. 1; AAA34767." evidence="6" ref="1">
    <original>A</original>
    <variation>R</variation>
    <location>
        <position position="240"/>
    </location>
</feature>
<feature type="strand" evidence="7">
    <location>
        <begin position="2"/>
        <end position="8"/>
    </location>
</feature>
<feature type="helix" evidence="7">
    <location>
        <begin position="14"/>
        <end position="23"/>
    </location>
</feature>
<feature type="strand" evidence="7">
    <location>
        <begin position="27"/>
        <end position="33"/>
    </location>
</feature>
<feature type="strand" evidence="7">
    <location>
        <begin position="35"/>
        <end position="37"/>
    </location>
</feature>
<feature type="helix" evidence="7">
    <location>
        <begin position="38"/>
        <end position="46"/>
    </location>
</feature>
<feature type="strand" evidence="7">
    <location>
        <begin position="48"/>
        <end position="51"/>
    </location>
</feature>
<feature type="strand" evidence="7">
    <location>
        <begin position="53"/>
        <end position="57"/>
    </location>
</feature>
<feature type="helix" evidence="7">
    <location>
        <begin position="62"/>
        <end position="66"/>
    </location>
</feature>
<feature type="strand" evidence="7">
    <location>
        <begin position="70"/>
        <end position="74"/>
    </location>
</feature>
<feature type="helix" evidence="7">
    <location>
        <begin position="86"/>
        <end position="107"/>
    </location>
</feature>
<feature type="strand" evidence="7">
    <location>
        <begin position="112"/>
        <end position="115"/>
    </location>
</feature>
<feature type="helix" evidence="7">
    <location>
        <begin position="120"/>
        <end position="133"/>
    </location>
</feature>
<feature type="helix" evidence="7">
    <location>
        <begin position="139"/>
        <end position="141"/>
    </location>
</feature>
<feature type="strand" evidence="7">
    <location>
        <begin position="142"/>
        <end position="144"/>
    </location>
</feature>
<feature type="helix" evidence="7">
    <location>
        <begin position="147"/>
        <end position="164"/>
    </location>
</feature>
<feature type="helix" evidence="7">
    <location>
        <begin position="166"/>
        <end position="170"/>
    </location>
</feature>
<feature type="helix" evidence="7">
    <location>
        <begin position="174"/>
        <end position="179"/>
    </location>
</feature>
<feature type="strand" evidence="7">
    <location>
        <begin position="181"/>
        <end position="185"/>
    </location>
</feature>
<feature type="helix" evidence="7">
    <location>
        <begin position="189"/>
        <end position="191"/>
    </location>
</feature>
<feature type="strand" evidence="7">
    <location>
        <begin position="192"/>
        <end position="196"/>
    </location>
</feature>
<feature type="helix" evidence="7">
    <location>
        <begin position="199"/>
        <end position="205"/>
    </location>
</feature>
<feature type="helix" evidence="7">
    <location>
        <begin position="206"/>
        <end position="208"/>
    </location>
</feature>
<feature type="helix" evidence="7">
    <location>
        <begin position="209"/>
        <end position="217"/>
    </location>
</feature>
<feature type="helix" evidence="7">
    <location>
        <begin position="219"/>
        <end position="226"/>
    </location>
</feature>
<feature type="turn" evidence="7">
    <location>
        <begin position="227"/>
        <end position="229"/>
    </location>
</feature>
<feature type="helix" evidence="7">
    <location>
        <begin position="235"/>
        <end position="250"/>
    </location>
</feature>
<feature type="helix" evidence="7">
    <location>
        <begin position="251"/>
        <end position="253"/>
    </location>
</feature>
<feature type="strand" evidence="7">
    <location>
        <begin position="263"/>
        <end position="267"/>
    </location>
</feature>
<feature type="helix" evidence="7">
    <location>
        <begin position="268"/>
        <end position="270"/>
    </location>
</feature>
<feature type="helix" evidence="7">
    <location>
        <begin position="274"/>
        <end position="280"/>
    </location>
</feature>
<feature type="strand" evidence="7">
    <location>
        <begin position="288"/>
        <end position="296"/>
    </location>
</feature>
<feature type="strand" evidence="7">
    <location>
        <begin position="299"/>
        <end position="303"/>
    </location>
</feature>
<feature type="helix" evidence="7">
    <location>
        <begin position="306"/>
        <end position="309"/>
    </location>
</feature>
<feature type="helix" evidence="7">
    <location>
        <begin position="313"/>
        <end position="338"/>
    </location>
</feature>